<reference key="1">
    <citation type="journal article" date="2009" name="Genome Res.">
        <title>Newly introduced genomic prophage islands are critical determinants of in vivo competitiveness in the Liverpool epidemic strain of Pseudomonas aeruginosa.</title>
        <authorList>
            <person name="Winstanley C."/>
            <person name="Langille M.G.I."/>
            <person name="Fothergill J.L."/>
            <person name="Kukavica-Ibrulj I."/>
            <person name="Paradis-Bleau C."/>
            <person name="Sanschagrin F."/>
            <person name="Thomson N.R."/>
            <person name="Winsor G.L."/>
            <person name="Quail M.A."/>
            <person name="Lennard N."/>
            <person name="Bignell A."/>
            <person name="Clarke L."/>
            <person name="Seeger K."/>
            <person name="Saunders D."/>
            <person name="Harris D."/>
            <person name="Parkhill J."/>
            <person name="Hancock R.E.W."/>
            <person name="Brinkman F.S.L."/>
            <person name="Levesque R.C."/>
        </authorList>
    </citation>
    <scope>NUCLEOTIDE SEQUENCE [LARGE SCALE GENOMIC DNA]</scope>
    <source>
        <strain>LESB58</strain>
    </source>
</reference>
<protein>
    <recommendedName>
        <fullName evidence="1">Chorismate synthase</fullName>
        <shortName evidence="1">CS</shortName>
        <ecNumber evidence="1">4.2.3.5</ecNumber>
    </recommendedName>
    <alternativeName>
        <fullName evidence="1">5-enolpyruvylshikimate-3-phosphate phospholyase</fullName>
    </alternativeName>
</protein>
<name>AROC_PSEA8</name>
<keyword id="KW-0002">3D-structure</keyword>
<keyword id="KW-0028">Amino-acid biosynthesis</keyword>
<keyword id="KW-0057">Aromatic amino acid biosynthesis</keyword>
<keyword id="KW-0274">FAD</keyword>
<keyword id="KW-0285">Flavoprotein</keyword>
<keyword id="KW-0288">FMN</keyword>
<keyword id="KW-0456">Lyase</keyword>
<keyword id="KW-0521">NADP</keyword>
<organism>
    <name type="scientific">Pseudomonas aeruginosa (strain LESB58)</name>
    <dbReference type="NCBI Taxonomy" id="557722"/>
    <lineage>
        <taxon>Bacteria</taxon>
        <taxon>Pseudomonadati</taxon>
        <taxon>Pseudomonadota</taxon>
        <taxon>Gammaproteobacteria</taxon>
        <taxon>Pseudomonadales</taxon>
        <taxon>Pseudomonadaceae</taxon>
        <taxon>Pseudomonas</taxon>
    </lineage>
</organism>
<comment type="function">
    <text evidence="1">Catalyzes the anti-1,4-elimination of the C-3 phosphate and the C-6 proR hydrogen from 5-enolpyruvylshikimate-3-phosphate (EPSP) to yield chorismate, which is the branch point compound that serves as the starting substrate for the three terminal pathways of aromatic amino acid biosynthesis. This reaction introduces a second double bond into the aromatic ring system.</text>
</comment>
<comment type="catalytic activity">
    <reaction evidence="1">
        <text>5-O-(1-carboxyvinyl)-3-phosphoshikimate = chorismate + phosphate</text>
        <dbReference type="Rhea" id="RHEA:21020"/>
        <dbReference type="ChEBI" id="CHEBI:29748"/>
        <dbReference type="ChEBI" id="CHEBI:43474"/>
        <dbReference type="ChEBI" id="CHEBI:57701"/>
        <dbReference type="EC" id="4.2.3.5"/>
    </reaction>
</comment>
<comment type="cofactor">
    <cofactor evidence="1">
        <name>FMNH2</name>
        <dbReference type="ChEBI" id="CHEBI:57618"/>
    </cofactor>
    <text evidence="1">Reduced FMN (FMNH(2)).</text>
</comment>
<comment type="pathway">
    <text evidence="1">Metabolic intermediate biosynthesis; chorismate biosynthesis; chorismate from D-erythrose 4-phosphate and phosphoenolpyruvate: step 7/7.</text>
</comment>
<comment type="subunit">
    <text evidence="1">Homotetramer.</text>
</comment>
<comment type="similarity">
    <text evidence="1">Belongs to the chorismate synthase family.</text>
</comment>
<gene>
    <name evidence="1" type="primary">aroC</name>
    <name type="ordered locus">PLES_36461</name>
</gene>
<feature type="chain" id="PRO_1000119495" description="Chorismate synthase">
    <location>
        <begin position="1"/>
        <end position="363"/>
    </location>
</feature>
<feature type="region of interest" description="Disordered" evidence="2">
    <location>
        <begin position="42"/>
        <end position="61"/>
    </location>
</feature>
<feature type="binding site" evidence="1">
    <location>
        <position position="48"/>
    </location>
    <ligand>
        <name>NADP(+)</name>
        <dbReference type="ChEBI" id="CHEBI:58349"/>
    </ligand>
</feature>
<feature type="binding site" evidence="1">
    <location>
        <position position="54"/>
    </location>
    <ligand>
        <name>NADP(+)</name>
        <dbReference type="ChEBI" id="CHEBI:58349"/>
    </ligand>
</feature>
<feature type="binding site" evidence="1">
    <location>
        <begin position="125"/>
        <end position="127"/>
    </location>
    <ligand>
        <name>FMN</name>
        <dbReference type="ChEBI" id="CHEBI:58210"/>
    </ligand>
</feature>
<feature type="binding site" evidence="1">
    <location>
        <begin position="237"/>
        <end position="238"/>
    </location>
    <ligand>
        <name>FMN</name>
        <dbReference type="ChEBI" id="CHEBI:58210"/>
    </ligand>
</feature>
<feature type="binding site" evidence="1">
    <location>
        <position position="277"/>
    </location>
    <ligand>
        <name>FMN</name>
        <dbReference type="ChEBI" id="CHEBI:58210"/>
    </ligand>
</feature>
<feature type="binding site" evidence="1">
    <location>
        <begin position="292"/>
        <end position="296"/>
    </location>
    <ligand>
        <name>FMN</name>
        <dbReference type="ChEBI" id="CHEBI:58210"/>
    </ligand>
</feature>
<feature type="binding site" evidence="1">
    <location>
        <position position="318"/>
    </location>
    <ligand>
        <name>FMN</name>
        <dbReference type="ChEBI" id="CHEBI:58210"/>
    </ligand>
</feature>
<feature type="strand" evidence="3">
    <location>
        <begin position="8"/>
        <end position="10"/>
    </location>
</feature>
<feature type="strand" evidence="3">
    <location>
        <begin position="12"/>
        <end position="15"/>
    </location>
</feature>
<feature type="strand" evidence="3">
    <location>
        <begin position="23"/>
        <end position="27"/>
    </location>
</feature>
<feature type="helix" evidence="3">
    <location>
        <begin position="38"/>
        <end position="46"/>
    </location>
</feature>
<feature type="strand" evidence="3">
    <location>
        <begin position="69"/>
        <end position="72"/>
    </location>
</feature>
<feature type="strand" evidence="3">
    <location>
        <begin position="81"/>
        <end position="85"/>
    </location>
</feature>
<feature type="helix" evidence="3">
    <location>
        <begin position="132"/>
        <end position="147"/>
    </location>
</feature>
<feature type="strand" evidence="3">
    <location>
        <begin position="151"/>
        <end position="159"/>
    </location>
</feature>
<feature type="helix" evidence="3">
    <location>
        <begin position="170"/>
        <end position="174"/>
    </location>
</feature>
<feature type="helix" evidence="3">
    <location>
        <begin position="182"/>
        <end position="184"/>
    </location>
</feature>
<feature type="helix" evidence="3">
    <location>
        <begin position="185"/>
        <end position="198"/>
    </location>
</feature>
<feature type="strand" evidence="3">
    <location>
        <begin position="204"/>
        <end position="212"/>
    </location>
</feature>
<feature type="helix" evidence="3">
    <location>
        <begin position="225"/>
        <end position="234"/>
    </location>
</feature>
<feature type="strand" evidence="3">
    <location>
        <begin position="239"/>
        <end position="244"/>
    </location>
</feature>
<feature type="turn" evidence="3">
    <location>
        <begin position="245"/>
        <end position="250"/>
    </location>
</feature>
<feature type="strand" evidence="3">
    <location>
        <begin position="285"/>
        <end position="291"/>
    </location>
</feature>
<feature type="helix" evidence="3">
    <location>
        <begin position="328"/>
        <end position="348"/>
    </location>
</feature>
<proteinExistence type="evidence at protein level"/>
<dbReference type="EC" id="4.2.3.5" evidence="1"/>
<dbReference type="EMBL" id="FM209186">
    <property type="protein sequence ID" value="CAW28373.1"/>
    <property type="molecule type" value="Genomic_DNA"/>
</dbReference>
<dbReference type="RefSeq" id="WP_003087653.1">
    <property type="nucleotide sequence ID" value="NC_011770.1"/>
</dbReference>
<dbReference type="PDB" id="5Z9A">
    <property type="method" value="X-ray"/>
    <property type="resolution" value="2.79 A"/>
    <property type="chains" value="A/B=1-363"/>
</dbReference>
<dbReference type="PDBsum" id="5Z9A"/>
<dbReference type="SMR" id="B7UV40"/>
<dbReference type="KEGG" id="pag:PLES_36461"/>
<dbReference type="HOGENOM" id="CLU_034547_0_2_6"/>
<dbReference type="UniPathway" id="UPA00053">
    <property type="reaction ID" value="UER00090"/>
</dbReference>
<dbReference type="GO" id="GO:0005829">
    <property type="term" value="C:cytosol"/>
    <property type="evidence" value="ECO:0007669"/>
    <property type="project" value="TreeGrafter"/>
</dbReference>
<dbReference type="GO" id="GO:0004107">
    <property type="term" value="F:chorismate synthase activity"/>
    <property type="evidence" value="ECO:0007669"/>
    <property type="project" value="UniProtKB-UniRule"/>
</dbReference>
<dbReference type="GO" id="GO:0010181">
    <property type="term" value="F:FMN binding"/>
    <property type="evidence" value="ECO:0007669"/>
    <property type="project" value="TreeGrafter"/>
</dbReference>
<dbReference type="GO" id="GO:0008652">
    <property type="term" value="P:amino acid biosynthetic process"/>
    <property type="evidence" value="ECO:0007669"/>
    <property type="project" value="UniProtKB-KW"/>
</dbReference>
<dbReference type="GO" id="GO:0009073">
    <property type="term" value="P:aromatic amino acid family biosynthetic process"/>
    <property type="evidence" value="ECO:0007669"/>
    <property type="project" value="UniProtKB-KW"/>
</dbReference>
<dbReference type="GO" id="GO:0009423">
    <property type="term" value="P:chorismate biosynthetic process"/>
    <property type="evidence" value="ECO:0007669"/>
    <property type="project" value="UniProtKB-UniRule"/>
</dbReference>
<dbReference type="CDD" id="cd07304">
    <property type="entry name" value="Chorismate_synthase"/>
    <property type="match status" value="1"/>
</dbReference>
<dbReference type="FunFam" id="3.60.150.10:FF:000001">
    <property type="entry name" value="Chorismate synthase"/>
    <property type="match status" value="1"/>
</dbReference>
<dbReference type="Gene3D" id="3.60.150.10">
    <property type="entry name" value="Chorismate synthase AroC"/>
    <property type="match status" value="1"/>
</dbReference>
<dbReference type="HAMAP" id="MF_00300">
    <property type="entry name" value="Chorismate_synth"/>
    <property type="match status" value="1"/>
</dbReference>
<dbReference type="InterPro" id="IPR000453">
    <property type="entry name" value="Chorismate_synth"/>
</dbReference>
<dbReference type="InterPro" id="IPR035904">
    <property type="entry name" value="Chorismate_synth_AroC_sf"/>
</dbReference>
<dbReference type="InterPro" id="IPR020541">
    <property type="entry name" value="Chorismate_synthase_CS"/>
</dbReference>
<dbReference type="NCBIfam" id="TIGR00033">
    <property type="entry name" value="aroC"/>
    <property type="match status" value="1"/>
</dbReference>
<dbReference type="NCBIfam" id="NF003793">
    <property type="entry name" value="PRK05382.1"/>
    <property type="match status" value="1"/>
</dbReference>
<dbReference type="PANTHER" id="PTHR21085">
    <property type="entry name" value="CHORISMATE SYNTHASE"/>
    <property type="match status" value="1"/>
</dbReference>
<dbReference type="PANTHER" id="PTHR21085:SF0">
    <property type="entry name" value="CHORISMATE SYNTHASE"/>
    <property type="match status" value="1"/>
</dbReference>
<dbReference type="Pfam" id="PF01264">
    <property type="entry name" value="Chorismate_synt"/>
    <property type="match status" value="1"/>
</dbReference>
<dbReference type="PIRSF" id="PIRSF001456">
    <property type="entry name" value="Chorismate_synth"/>
    <property type="match status" value="1"/>
</dbReference>
<dbReference type="SUPFAM" id="SSF103263">
    <property type="entry name" value="Chorismate synthase, AroC"/>
    <property type="match status" value="1"/>
</dbReference>
<dbReference type="PROSITE" id="PS00787">
    <property type="entry name" value="CHORISMATE_SYNTHASE_1"/>
    <property type="match status" value="1"/>
</dbReference>
<dbReference type="PROSITE" id="PS00788">
    <property type="entry name" value="CHORISMATE_SYNTHASE_2"/>
    <property type="match status" value="1"/>
</dbReference>
<dbReference type="PROSITE" id="PS00789">
    <property type="entry name" value="CHORISMATE_SYNTHASE_3"/>
    <property type="match status" value="1"/>
</dbReference>
<evidence type="ECO:0000255" key="1">
    <source>
        <dbReference type="HAMAP-Rule" id="MF_00300"/>
    </source>
</evidence>
<evidence type="ECO:0000256" key="2">
    <source>
        <dbReference type="SAM" id="MobiDB-lite"/>
    </source>
</evidence>
<evidence type="ECO:0007829" key="3">
    <source>
        <dbReference type="PDB" id="5Z9A"/>
    </source>
</evidence>
<accession>B7UV40</accession>
<sequence>MSGNTYGKLFTVTTAGESHGPALVAIVDGCPPGLELSARDLQRDLDRRKPGTSRHTTQRQEADEVEILSGVFEGKTTGTPIGLLIRNTDQKSKDYSAIKDLFRPAHADYTYHHKYGVRDYRGGGRSSARETAMRVAAGAIAKKYLAGLGIQVRGYMSQLGPIEIPFRSWDSVEQNAFFSPDPDKVPELEAYMDQLRRDQDSVGAKITVVAEGVPPGLGEPIFDRLDAELAHALMSINAVKGVEIGAGFASIAQRGTEHRDELTPQGFLSNNAGGILGGISSGQPIVAHLALKPTSSITTPGRSIDTAGEPVDMITKGRHDPCVGIRATPIAEAMMAIVLLDQLLRQRGQNADVRVDTPVLPQL</sequence>